<accession>Q9MTP3</accession>
<comment type="function">
    <text evidence="1">NDH shuttles electrons from NAD(P)H:plastoquinone, via FMN and iron-sulfur (Fe-S) centers, to quinones in the photosynthetic chain and possibly in a chloroplast respiratory chain. The immediate electron acceptor for the enzyme in this species is believed to be plastoquinone. Couples the redox reaction to proton translocation, and thus conserves the redox energy in a proton gradient.</text>
</comment>
<comment type="catalytic activity">
    <reaction evidence="1">
        <text>a plastoquinone + NADH + (n+1) H(+)(in) = a plastoquinol + NAD(+) + n H(+)(out)</text>
        <dbReference type="Rhea" id="RHEA:42608"/>
        <dbReference type="Rhea" id="RHEA-COMP:9561"/>
        <dbReference type="Rhea" id="RHEA-COMP:9562"/>
        <dbReference type="ChEBI" id="CHEBI:15378"/>
        <dbReference type="ChEBI" id="CHEBI:17757"/>
        <dbReference type="ChEBI" id="CHEBI:57540"/>
        <dbReference type="ChEBI" id="CHEBI:57945"/>
        <dbReference type="ChEBI" id="CHEBI:62192"/>
    </reaction>
</comment>
<comment type="catalytic activity">
    <reaction evidence="1">
        <text>a plastoquinone + NADPH + (n+1) H(+)(in) = a plastoquinol + NADP(+) + n H(+)(out)</text>
        <dbReference type="Rhea" id="RHEA:42612"/>
        <dbReference type="Rhea" id="RHEA-COMP:9561"/>
        <dbReference type="Rhea" id="RHEA-COMP:9562"/>
        <dbReference type="ChEBI" id="CHEBI:15378"/>
        <dbReference type="ChEBI" id="CHEBI:17757"/>
        <dbReference type="ChEBI" id="CHEBI:57783"/>
        <dbReference type="ChEBI" id="CHEBI:58349"/>
        <dbReference type="ChEBI" id="CHEBI:62192"/>
    </reaction>
</comment>
<comment type="subunit">
    <text evidence="1">NDH is composed of at least 16 different subunits, 5 of which are encoded in the nucleus.</text>
</comment>
<comment type="subcellular location">
    <subcellularLocation>
        <location evidence="1">Plastid</location>
        <location evidence="1">Chloroplast thylakoid membrane</location>
        <topology evidence="1">Peripheral membrane protein</topology>
        <orientation evidence="1">Stromal side</orientation>
    </subcellularLocation>
</comment>
<comment type="similarity">
    <text evidence="1">Belongs to the complex I 30 kDa subunit family.</text>
</comment>
<dbReference type="EC" id="7.1.1.-" evidence="1"/>
<dbReference type="EMBL" id="AJ271079">
    <property type="protein sequence ID" value="CAB67132.1"/>
    <property type="molecule type" value="Genomic_DNA"/>
</dbReference>
<dbReference type="RefSeq" id="NP_084667.1">
    <property type="nucleotide sequence ID" value="NC_002693.2"/>
</dbReference>
<dbReference type="SMR" id="Q9MTP3"/>
<dbReference type="GeneID" id="802810"/>
<dbReference type="GO" id="GO:0009535">
    <property type="term" value="C:chloroplast thylakoid membrane"/>
    <property type="evidence" value="ECO:0007669"/>
    <property type="project" value="UniProtKB-SubCell"/>
</dbReference>
<dbReference type="GO" id="GO:0008137">
    <property type="term" value="F:NADH dehydrogenase (ubiquinone) activity"/>
    <property type="evidence" value="ECO:0007669"/>
    <property type="project" value="InterPro"/>
</dbReference>
<dbReference type="GO" id="GO:0048038">
    <property type="term" value="F:quinone binding"/>
    <property type="evidence" value="ECO:0007669"/>
    <property type="project" value="UniProtKB-KW"/>
</dbReference>
<dbReference type="GO" id="GO:0019684">
    <property type="term" value="P:photosynthesis, light reaction"/>
    <property type="evidence" value="ECO:0007669"/>
    <property type="project" value="UniProtKB-UniRule"/>
</dbReference>
<dbReference type="FunFam" id="3.30.460.80:FF:000004">
    <property type="entry name" value="NAD(P)H-quinone oxidoreductase subunit J, chloroplastic"/>
    <property type="match status" value="1"/>
</dbReference>
<dbReference type="Gene3D" id="3.30.460.80">
    <property type="entry name" value="NADH:ubiquinone oxidoreductase, 30kDa subunit"/>
    <property type="match status" value="1"/>
</dbReference>
<dbReference type="HAMAP" id="MF_01357">
    <property type="entry name" value="NDH1_NuoC"/>
    <property type="match status" value="1"/>
</dbReference>
<dbReference type="InterPro" id="IPR010218">
    <property type="entry name" value="NADH_DH_suC"/>
</dbReference>
<dbReference type="InterPro" id="IPR037232">
    <property type="entry name" value="NADH_quin_OxRdtase_su_C/D-like"/>
</dbReference>
<dbReference type="InterPro" id="IPR001268">
    <property type="entry name" value="NADH_UbQ_OxRdtase_30kDa_su"/>
</dbReference>
<dbReference type="InterPro" id="IPR020396">
    <property type="entry name" value="NADH_UbQ_OxRdtase_CS"/>
</dbReference>
<dbReference type="NCBIfam" id="NF009141">
    <property type="entry name" value="PRK12494.1"/>
    <property type="match status" value="1"/>
</dbReference>
<dbReference type="PANTHER" id="PTHR10884:SF14">
    <property type="entry name" value="NADH DEHYDROGENASE [UBIQUINONE] IRON-SULFUR PROTEIN 3, MITOCHONDRIAL"/>
    <property type="match status" value="1"/>
</dbReference>
<dbReference type="PANTHER" id="PTHR10884">
    <property type="entry name" value="NADH DEHYDROGENASE UBIQUINONE IRON-SULFUR PROTEIN 3"/>
    <property type="match status" value="1"/>
</dbReference>
<dbReference type="Pfam" id="PF00329">
    <property type="entry name" value="Complex1_30kDa"/>
    <property type="match status" value="1"/>
</dbReference>
<dbReference type="SUPFAM" id="SSF143243">
    <property type="entry name" value="Nqo5-like"/>
    <property type="match status" value="1"/>
</dbReference>
<dbReference type="PROSITE" id="PS00542">
    <property type="entry name" value="COMPLEX1_30K"/>
    <property type="match status" value="1"/>
</dbReference>
<organism>
    <name type="scientific">Oenothera elata subsp. hookeri</name>
    <name type="common">Hooker's evening primrose</name>
    <name type="synonym">Oenothera hookeri</name>
    <dbReference type="NCBI Taxonomy" id="85636"/>
    <lineage>
        <taxon>Eukaryota</taxon>
        <taxon>Viridiplantae</taxon>
        <taxon>Streptophyta</taxon>
        <taxon>Embryophyta</taxon>
        <taxon>Tracheophyta</taxon>
        <taxon>Spermatophyta</taxon>
        <taxon>Magnoliopsida</taxon>
        <taxon>eudicotyledons</taxon>
        <taxon>Gunneridae</taxon>
        <taxon>Pentapetalae</taxon>
        <taxon>rosids</taxon>
        <taxon>malvids</taxon>
        <taxon>Myrtales</taxon>
        <taxon>Onagraceae</taxon>
        <taxon>Onagroideae</taxon>
        <taxon>Onagreae</taxon>
        <taxon>Oenothera</taxon>
    </lineage>
</organism>
<keyword id="KW-0150">Chloroplast</keyword>
<keyword id="KW-0472">Membrane</keyword>
<keyword id="KW-0520">NAD</keyword>
<keyword id="KW-0521">NADP</keyword>
<keyword id="KW-0934">Plastid</keyword>
<keyword id="KW-0618">Plastoquinone</keyword>
<keyword id="KW-0874">Quinone</keyword>
<keyword id="KW-0793">Thylakoid</keyword>
<keyword id="KW-1278">Translocase</keyword>
<keyword id="KW-0813">Transport</keyword>
<reference key="1">
    <citation type="journal article" date="2000" name="Mol. Gen. Genet.">
        <title>Complete nucleotide sequence of the Oenothera elata plastid chromosome, representing plastome I of the five distinguishable Euoenothera plastomes.</title>
        <authorList>
            <person name="Hupfer H."/>
            <person name="Swiatek M."/>
            <person name="Hornung S."/>
            <person name="Herrmann R.G."/>
            <person name="Maier R.M."/>
            <person name="Chiu W.-L."/>
            <person name="Sears B."/>
        </authorList>
    </citation>
    <scope>NUCLEOTIDE SEQUENCE [LARGE SCALE GENOMIC DNA]</scope>
    <source>
        <strain>cv. Johansen</strain>
    </source>
</reference>
<evidence type="ECO:0000255" key="1">
    <source>
        <dbReference type="HAMAP-Rule" id="MF_01357"/>
    </source>
</evidence>
<name>NDHJ_OENEH</name>
<gene>
    <name evidence="1" type="primary">ndhJ</name>
</gene>
<proteinExistence type="inferred from homology"/>
<feature type="chain" id="PRO_0000118658" description="NAD(P)H-quinone oxidoreductase subunit J, chloroplastic">
    <location>
        <begin position="1"/>
        <end position="158"/>
    </location>
</feature>
<geneLocation type="chloroplast"/>
<sequence length="158" mass="18592">MQGRLSAWLVKHGLVHRSLGFDYQGIETLQIKPEEWHSIAVILYVYGYNYLRSQCAYDVAPGGLLASVYHLTRIEYGVDQAEEVCIKVFAPRNNPRIPSVFWVWKSADFQERESYDMLGIRYDNHPRLKRILMPESWIGWPLRKDYIAPNFYEIQDAH</sequence>
<protein>
    <recommendedName>
        <fullName evidence="1">NAD(P)H-quinone oxidoreductase subunit J, chloroplastic</fullName>
        <ecNumber evidence="1">7.1.1.-</ecNumber>
    </recommendedName>
    <alternativeName>
        <fullName>NAD(P)H dehydrogenase subunit J</fullName>
    </alternativeName>
    <alternativeName>
        <fullName evidence="1">NADH-plastoquinone oxidoreductase subunit J</fullName>
    </alternativeName>
</protein>